<evidence type="ECO:0000255" key="1">
    <source>
        <dbReference type="HAMAP-Rule" id="MF_00089"/>
    </source>
</evidence>
<sequence length="631" mass="70803">MSTTTLTRREQRAKAQHFIDTLEGTAFPNSKRIYVTGSQHDIRVPMREIQLSPTLIGGSKDNPQFEENEAVPVYDTSGPYGDPEVAINVQQGLAKLRQPWIDARNDSEELDDRSSAYTRERLADDGLDDLRFTGLLTPKRAKAGKRVTQLHYARKGIVTPEMEFIAIRENMGRERIRSEVLRHQHPGMSFGARLPENITPEFVRDEVAAGRAIIPANINHPESEPMIIGRNFLVKVNANIGNSAVTSSIEEEVEKLVWSTRWGADTVMDLSTGRYIHETREWILRNSPVPIGTVPIYQALEKVNGIAEDLTWEAFRDTLLEQAEQGVDYFTIHAGVLLRYVPMTAKRLTGIVSRGGSIMAKWCLSHHKENFLFEHFREICEICAAYDVSLSLGDGLRPGSIQDANDEAQFSELHTLGELTKIAWEYDVQVMIEGPGHVPMHMIQRNMTEELESCHEAPFYTLGPLTTDIAPGYDHFTSGIGAAMIGWFGCAMLCYVTPKEHLGLPNKEDVKQGLITYKIAAHAADLAKGHPGAQIRDNAMSKARFEFRWEDQFNLALDPFTARAYHDETLPQESGKVAHFCSMCGPKFCSMKISQEVRDYAAAQTIEVGMADMSENFRAKGGEIYLKREEA</sequence>
<organism>
    <name type="scientific">Salmonella heidelberg (strain SL476)</name>
    <dbReference type="NCBI Taxonomy" id="454169"/>
    <lineage>
        <taxon>Bacteria</taxon>
        <taxon>Pseudomonadati</taxon>
        <taxon>Pseudomonadota</taxon>
        <taxon>Gammaproteobacteria</taxon>
        <taxon>Enterobacterales</taxon>
        <taxon>Enterobacteriaceae</taxon>
        <taxon>Salmonella</taxon>
    </lineage>
</organism>
<gene>
    <name evidence="1" type="primary">thiC</name>
    <name type="ordered locus">SeHA_C4494</name>
</gene>
<reference key="1">
    <citation type="journal article" date="2011" name="J. Bacteriol.">
        <title>Comparative genomics of 28 Salmonella enterica isolates: evidence for CRISPR-mediated adaptive sublineage evolution.</title>
        <authorList>
            <person name="Fricke W.F."/>
            <person name="Mammel M.K."/>
            <person name="McDermott P.F."/>
            <person name="Tartera C."/>
            <person name="White D.G."/>
            <person name="Leclerc J.E."/>
            <person name="Ravel J."/>
            <person name="Cebula T.A."/>
        </authorList>
    </citation>
    <scope>NUCLEOTIDE SEQUENCE [LARGE SCALE GENOMIC DNA]</scope>
    <source>
        <strain>SL476</strain>
    </source>
</reference>
<feature type="chain" id="PRO_1000093231" description="Phosphomethylpyrimidine synthase">
    <location>
        <begin position="1"/>
        <end position="631"/>
    </location>
</feature>
<feature type="binding site" evidence="1">
    <location>
        <position position="239"/>
    </location>
    <ligand>
        <name>substrate</name>
    </ligand>
</feature>
<feature type="binding site" evidence="1">
    <location>
        <position position="268"/>
    </location>
    <ligand>
        <name>substrate</name>
    </ligand>
</feature>
<feature type="binding site" evidence="1">
    <location>
        <position position="297"/>
    </location>
    <ligand>
        <name>substrate</name>
    </ligand>
</feature>
<feature type="binding site" evidence="1">
    <location>
        <position position="333"/>
    </location>
    <ligand>
        <name>substrate</name>
    </ligand>
</feature>
<feature type="binding site" evidence="1">
    <location>
        <begin position="353"/>
        <end position="355"/>
    </location>
    <ligand>
        <name>substrate</name>
    </ligand>
</feature>
<feature type="binding site" evidence="1">
    <location>
        <begin position="394"/>
        <end position="397"/>
    </location>
    <ligand>
        <name>substrate</name>
    </ligand>
</feature>
<feature type="binding site" evidence="1">
    <location>
        <position position="433"/>
    </location>
    <ligand>
        <name>substrate</name>
    </ligand>
</feature>
<feature type="binding site" evidence="1">
    <location>
        <position position="437"/>
    </location>
    <ligand>
        <name>Zn(2+)</name>
        <dbReference type="ChEBI" id="CHEBI:29105"/>
    </ligand>
</feature>
<feature type="binding site" evidence="1">
    <location>
        <position position="460"/>
    </location>
    <ligand>
        <name>substrate</name>
    </ligand>
</feature>
<feature type="binding site" evidence="1">
    <location>
        <position position="501"/>
    </location>
    <ligand>
        <name>Zn(2+)</name>
        <dbReference type="ChEBI" id="CHEBI:29105"/>
    </ligand>
</feature>
<feature type="binding site" evidence="1">
    <location>
        <position position="581"/>
    </location>
    <ligand>
        <name>[4Fe-4S] cluster</name>
        <dbReference type="ChEBI" id="CHEBI:49883"/>
        <note>4Fe-4S-S-AdoMet</note>
    </ligand>
</feature>
<feature type="binding site" evidence="1">
    <location>
        <position position="584"/>
    </location>
    <ligand>
        <name>[4Fe-4S] cluster</name>
        <dbReference type="ChEBI" id="CHEBI:49883"/>
        <note>4Fe-4S-S-AdoMet</note>
    </ligand>
</feature>
<feature type="binding site" evidence="1">
    <location>
        <position position="589"/>
    </location>
    <ligand>
        <name>[4Fe-4S] cluster</name>
        <dbReference type="ChEBI" id="CHEBI:49883"/>
        <note>4Fe-4S-S-AdoMet</note>
    </ligand>
</feature>
<comment type="function">
    <text evidence="1">Catalyzes the synthesis of the hydroxymethylpyrimidine phosphate (HMP-P) moiety of thiamine from aminoimidazole ribotide (AIR) in a radical S-adenosyl-L-methionine (SAM)-dependent reaction.</text>
</comment>
<comment type="catalytic activity">
    <reaction evidence="1">
        <text>5-amino-1-(5-phospho-beta-D-ribosyl)imidazole + S-adenosyl-L-methionine = 4-amino-2-methyl-5-(phosphooxymethyl)pyrimidine + CO + 5'-deoxyadenosine + formate + L-methionine + 3 H(+)</text>
        <dbReference type="Rhea" id="RHEA:24840"/>
        <dbReference type="ChEBI" id="CHEBI:15378"/>
        <dbReference type="ChEBI" id="CHEBI:15740"/>
        <dbReference type="ChEBI" id="CHEBI:17245"/>
        <dbReference type="ChEBI" id="CHEBI:17319"/>
        <dbReference type="ChEBI" id="CHEBI:57844"/>
        <dbReference type="ChEBI" id="CHEBI:58354"/>
        <dbReference type="ChEBI" id="CHEBI:59789"/>
        <dbReference type="ChEBI" id="CHEBI:137981"/>
        <dbReference type="EC" id="4.1.99.17"/>
    </reaction>
</comment>
<comment type="cofactor">
    <cofactor evidence="1">
        <name>[4Fe-4S] cluster</name>
        <dbReference type="ChEBI" id="CHEBI:49883"/>
    </cofactor>
    <text evidence="1">Binds 1 [4Fe-4S] cluster per subunit. The cluster is coordinated with 3 cysteines and an exchangeable S-adenosyl-L-methionine.</text>
</comment>
<comment type="pathway">
    <text evidence="1">Cofactor biosynthesis; thiamine diphosphate biosynthesis.</text>
</comment>
<comment type="subunit">
    <text evidence="1">Homodimer.</text>
</comment>
<comment type="similarity">
    <text evidence="1">Belongs to the ThiC family.</text>
</comment>
<accession>B4TCT3</accession>
<protein>
    <recommendedName>
        <fullName evidence="1">Phosphomethylpyrimidine synthase</fullName>
        <ecNumber evidence="1">4.1.99.17</ecNumber>
    </recommendedName>
    <alternativeName>
        <fullName evidence="1">Hydroxymethylpyrimidine phosphate synthase</fullName>
        <shortName evidence="1">HMP-P synthase</shortName>
        <shortName evidence="1">HMP-phosphate synthase</shortName>
        <shortName evidence="1">HMPP synthase</shortName>
    </alternativeName>
    <alternativeName>
        <fullName evidence="1">Thiamine biosynthesis protein ThiC</fullName>
    </alternativeName>
</protein>
<keyword id="KW-0004">4Fe-4S</keyword>
<keyword id="KW-0408">Iron</keyword>
<keyword id="KW-0411">Iron-sulfur</keyword>
<keyword id="KW-0456">Lyase</keyword>
<keyword id="KW-0479">Metal-binding</keyword>
<keyword id="KW-0949">S-adenosyl-L-methionine</keyword>
<keyword id="KW-0784">Thiamine biosynthesis</keyword>
<keyword id="KW-0862">Zinc</keyword>
<dbReference type="EC" id="4.1.99.17" evidence="1"/>
<dbReference type="EMBL" id="CP001120">
    <property type="protein sequence ID" value="ACF68102.1"/>
    <property type="molecule type" value="Genomic_DNA"/>
</dbReference>
<dbReference type="RefSeq" id="WP_000108414.1">
    <property type="nucleotide sequence ID" value="NC_011083.1"/>
</dbReference>
<dbReference type="SMR" id="B4TCT3"/>
<dbReference type="KEGG" id="seh:SeHA_C4494"/>
<dbReference type="HOGENOM" id="CLU_013181_2_1_6"/>
<dbReference type="UniPathway" id="UPA00060"/>
<dbReference type="Proteomes" id="UP000001866">
    <property type="component" value="Chromosome"/>
</dbReference>
<dbReference type="GO" id="GO:0005829">
    <property type="term" value="C:cytosol"/>
    <property type="evidence" value="ECO:0007669"/>
    <property type="project" value="TreeGrafter"/>
</dbReference>
<dbReference type="GO" id="GO:0051539">
    <property type="term" value="F:4 iron, 4 sulfur cluster binding"/>
    <property type="evidence" value="ECO:0007669"/>
    <property type="project" value="UniProtKB-KW"/>
</dbReference>
<dbReference type="GO" id="GO:0016830">
    <property type="term" value="F:carbon-carbon lyase activity"/>
    <property type="evidence" value="ECO:0007669"/>
    <property type="project" value="InterPro"/>
</dbReference>
<dbReference type="GO" id="GO:0008270">
    <property type="term" value="F:zinc ion binding"/>
    <property type="evidence" value="ECO:0007669"/>
    <property type="project" value="UniProtKB-UniRule"/>
</dbReference>
<dbReference type="GO" id="GO:0009228">
    <property type="term" value="P:thiamine biosynthetic process"/>
    <property type="evidence" value="ECO:0007669"/>
    <property type="project" value="UniProtKB-KW"/>
</dbReference>
<dbReference type="GO" id="GO:0009229">
    <property type="term" value="P:thiamine diphosphate biosynthetic process"/>
    <property type="evidence" value="ECO:0007669"/>
    <property type="project" value="UniProtKB-UniRule"/>
</dbReference>
<dbReference type="FunFam" id="3.20.20.540:FF:000001">
    <property type="entry name" value="Phosphomethylpyrimidine synthase"/>
    <property type="match status" value="1"/>
</dbReference>
<dbReference type="Gene3D" id="6.10.250.620">
    <property type="match status" value="1"/>
</dbReference>
<dbReference type="Gene3D" id="3.20.20.540">
    <property type="entry name" value="Radical SAM ThiC family, central domain"/>
    <property type="match status" value="1"/>
</dbReference>
<dbReference type="HAMAP" id="MF_00089">
    <property type="entry name" value="ThiC"/>
    <property type="match status" value="1"/>
</dbReference>
<dbReference type="InterPro" id="IPR037509">
    <property type="entry name" value="ThiC"/>
</dbReference>
<dbReference type="InterPro" id="IPR025747">
    <property type="entry name" value="ThiC-associated_dom"/>
</dbReference>
<dbReference type="InterPro" id="IPR038521">
    <property type="entry name" value="ThiC/Bza_core_dom"/>
</dbReference>
<dbReference type="InterPro" id="IPR002817">
    <property type="entry name" value="ThiC/BzaA/B"/>
</dbReference>
<dbReference type="NCBIfam" id="NF006763">
    <property type="entry name" value="PRK09284.1"/>
    <property type="match status" value="1"/>
</dbReference>
<dbReference type="NCBIfam" id="NF009895">
    <property type="entry name" value="PRK13352.1"/>
    <property type="match status" value="1"/>
</dbReference>
<dbReference type="NCBIfam" id="TIGR00190">
    <property type="entry name" value="thiC"/>
    <property type="match status" value="1"/>
</dbReference>
<dbReference type="PANTHER" id="PTHR30557:SF1">
    <property type="entry name" value="PHOSPHOMETHYLPYRIMIDINE SYNTHASE, CHLOROPLASTIC"/>
    <property type="match status" value="1"/>
</dbReference>
<dbReference type="PANTHER" id="PTHR30557">
    <property type="entry name" value="THIAMINE BIOSYNTHESIS PROTEIN THIC"/>
    <property type="match status" value="1"/>
</dbReference>
<dbReference type="Pfam" id="PF13667">
    <property type="entry name" value="ThiC-associated"/>
    <property type="match status" value="1"/>
</dbReference>
<dbReference type="Pfam" id="PF01964">
    <property type="entry name" value="ThiC_Rad_SAM"/>
    <property type="match status" value="1"/>
</dbReference>
<dbReference type="SFLD" id="SFLDF00407">
    <property type="entry name" value="phosphomethylpyrimidine_syntha"/>
    <property type="match status" value="1"/>
</dbReference>
<dbReference type="SFLD" id="SFLDG01114">
    <property type="entry name" value="phosphomethylpyrimidine_syntha"/>
    <property type="match status" value="1"/>
</dbReference>
<dbReference type="SFLD" id="SFLDS00113">
    <property type="entry name" value="Radical_SAM_Phosphomethylpyrim"/>
    <property type="match status" value="1"/>
</dbReference>
<proteinExistence type="inferred from homology"/>
<name>THIC_SALHS</name>